<keyword id="KW-0067">ATP-binding</keyword>
<keyword id="KW-0547">Nucleotide-binding</keyword>
<keyword id="KW-1185">Reference proteome</keyword>
<keyword id="KW-0843">Virulence</keyword>
<feature type="chain" id="PRO_0000428557" description="Universal stress protein MT2698">
    <location>
        <begin position="1"/>
        <end position="297"/>
    </location>
</feature>
<feature type="binding site" evidence="2">
    <location>
        <position position="13"/>
    </location>
    <ligand>
        <name>ATP</name>
        <dbReference type="ChEBI" id="CHEBI:30616"/>
        <label>1</label>
    </ligand>
</feature>
<feature type="binding site" evidence="2">
    <location>
        <position position="43"/>
    </location>
    <ligand>
        <name>ATP</name>
        <dbReference type="ChEBI" id="CHEBI:30616"/>
        <label>1</label>
    </ligand>
</feature>
<feature type="binding site" evidence="2">
    <location>
        <begin position="117"/>
        <end position="123"/>
    </location>
    <ligand>
        <name>ATP</name>
        <dbReference type="ChEBI" id="CHEBI:30616"/>
        <label>1</label>
    </ligand>
</feature>
<feature type="binding site" evidence="2">
    <location>
        <position position="127"/>
    </location>
    <ligand>
        <name>ATP</name>
        <dbReference type="ChEBI" id="CHEBI:30616"/>
        <label>1</label>
    </ligand>
</feature>
<feature type="binding site" evidence="2">
    <location>
        <begin position="131"/>
        <end position="132"/>
    </location>
    <ligand>
        <name>ATP</name>
        <dbReference type="ChEBI" id="CHEBI:30616"/>
        <label>1</label>
    </ligand>
</feature>
<feature type="binding site" evidence="2">
    <location>
        <position position="165"/>
    </location>
    <ligand>
        <name>ATP</name>
        <dbReference type="ChEBI" id="CHEBI:30616"/>
        <label>2</label>
    </ligand>
</feature>
<feature type="binding site" evidence="2">
    <location>
        <position position="198"/>
    </location>
    <ligand>
        <name>ATP</name>
        <dbReference type="ChEBI" id="CHEBI:30616"/>
        <label>2</label>
    </ligand>
</feature>
<feature type="binding site" evidence="2">
    <location>
        <begin position="262"/>
        <end position="268"/>
    </location>
    <ligand>
        <name>ATP</name>
        <dbReference type="ChEBI" id="CHEBI:30616"/>
        <label>2</label>
    </ligand>
</feature>
<feature type="binding site" evidence="2">
    <location>
        <begin position="276"/>
        <end position="278"/>
    </location>
    <ligand>
        <name>ATP</name>
        <dbReference type="ChEBI" id="CHEBI:30616"/>
        <label>2</label>
    </ligand>
</feature>
<name>Y2623_MYCTO</name>
<accession>P9WFD6</accession>
<accession>L0TAF1</accession>
<accession>O06189</accession>
<accession>Q7D6V7</accession>
<evidence type="ECO:0000250" key="1"/>
<evidence type="ECO:0000250" key="2">
    <source>
        <dbReference type="UniProtKB" id="P9WFD7"/>
    </source>
</evidence>
<evidence type="ECO:0000269" key="3">
    <source>
    </source>
</evidence>
<evidence type="ECO:0000305" key="4"/>
<organism>
    <name type="scientific">Mycobacterium tuberculosis (strain CDC 1551 / Oshkosh)</name>
    <dbReference type="NCBI Taxonomy" id="83331"/>
    <lineage>
        <taxon>Bacteria</taxon>
        <taxon>Bacillati</taxon>
        <taxon>Actinomycetota</taxon>
        <taxon>Actinomycetes</taxon>
        <taxon>Mycobacteriales</taxon>
        <taxon>Mycobacteriaceae</taxon>
        <taxon>Mycobacterium</taxon>
        <taxon>Mycobacterium tuberculosis complex</taxon>
    </lineage>
</organism>
<proteinExistence type="evidence at transcript level"/>
<gene>
    <name type="ordered locus">MT2698</name>
</gene>
<protein>
    <recommendedName>
        <fullName>Universal stress protein MT2698</fullName>
    </recommendedName>
</protein>
<sequence>MSSGNSSLGIIVGIDDSPAAQVAVRWAARDAELRKIPLTLVHAVSPEVATWLEVPLPPGVLRWQQDHGRHLIDDALKVVEQASLRAGPPTVHSEIVPAAAVPTLVDMSKDAVLMVVGCLGSGRWPGRLLGSVSSGLLRHAHCPVVIIHDEDSVMPHPQQAPVLVGVDGSSASELATAIAFDEASRRNVDLVALHAWSDVDVSEWPGIDWPATQSMAEQVLAERLAGWQERYPNVAITRVVVRDQPARQLVQRSEEAQLVVVGSRGRGGYAGMLVGSVGETVAQLARTPVIVARESLT</sequence>
<dbReference type="EMBL" id="AE000516">
    <property type="protein sequence ID" value="AAK47014.1"/>
    <property type="molecule type" value="Genomic_DNA"/>
</dbReference>
<dbReference type="PIR" id="F70572">
    <property type="entry name" value="F70572"/>
</dbReference>
<dbReference type="RefSeq" id="WP_003413592.1">
    <property type="nucleotide sequence ID" value="NZ_KK341227.1"/>
</dbReference>
<dbReference type="SMR" id="P9WFD6"/>
<dbReference type="KEGG" id="mtc:MT2698"/>
<dbReference type="PATRIC" id="fig|83331.31.peg.2909"/>
<dbReference type="HOGENOM" id="CLU_049301_2_3_11"/>
<dbReference type="Proteomes" id="UP000001020">
    <property type="component" value="Chromosome"/>
</dbReference>
<dbReference type="GO" id="GO:0005524">
    <property type="term" value="F:ATP binding"/>
    <property type="evidence" value="ECO:0007669"/>
    <property type="project" value="UniProtKB-KW"/>
</dbReference>
<dbReference type="CDD" id="cd23944">
    <property type="entry name" value="USP_Rv2623_repeat1"/>
    <property type="match status" value="1"/>
</dbReference>
<dbReference type="CDD" id="cd23661">
    <property type="entry name" value="USP_Rv2623_repeat2"/>
    <property type="match status" value="1"/>
</dbReference>
<dbReference type="FunFam" id="3.40.50.620:FF:000123">
    <property type="entry name" value="Universal stress protein family"/>
    <property type="match status" value="1"/>
</dbReference>
<dbReference type="Gene3D" id="3.40.50.620">
    <property type="entry name" value="HUPs"/>
    <property type="match status" value="2"/>
</dbReference>
<dbReference type="InterPro" id="IPR014729">
    <property type="entry name" value="Rossmann-like_a/b/a_fold"/>
</dbReference>
<dbReference type="InterPro" id="IPR006015">
    <property type="entry name" value="Universal_stress_UspA"/>
</dbReference>
<dbReference type="InterPro" id="IPR006016">
    <property type="entry name" value="UspA"/>
</dbReference>
<dbReference type="PANTHER" id="PTHR46268">
    <property type="entry name" value="STRESS RESPONSE PROTEIN NHAX"/>
    <property type="match status" value="1"/>
</dbReference>
<dbReference type="PANTHER" id="PTHR46268:SF27">
    <property type="entry name" value="UNIVERSAL STRESS PROTEIN RV2623"/>
    <property type="match status" value="1"/>
</dbReference>
<dbReference type="Pfam" id="PF00582">
    <property type="entry name" value="Usp"/>
    <property type="match status" value="2"/>
</dbReference>
<dbReference type="PRINTS" id="PR01438">
    <property type="entry name" value="UNVRSLSTRESS"/>
</dbReference>
<dbReference type="SUPFAM" id="SSF52402">
    <property type="entry name" value="Adenine nucleotide alpha hydrolases-like"/>
    <property type="match status" value="2"/>
</dbReference>
<comment type="function">
    <text evidence="1">May play a role in the establishment of a persistent infection (latency) in the host.</text>
</comment>
<comment type="subunit">
    <text evidence="1">Homodimer.</text>
</comment>
<comment type="induction">
    <text evidence="3">A member of the dormancy regulon. Induced in response to reduced oxygen tension (hypoxia) and low levels of nitric oxide (NO).</text>
</comment>
<comment type="similarity">
    <text evidence="4">Belongs to the universal stress protein A family.</text>
</comment>
<reference key="1">
    <citation type="journal article" date="2002" name="J. Bacteriol.">
        <title>Whole-genome comparison of Mycobacterium tuberculosis clinical and laboratory strains.</title>
        <authorList>
            <person name="Fleischmann R.D."/>
            <person name="Alland D."/>
            <person name="Eisen J.A."/>
            <person name="Carpenter L."/>
            <person name="White O."/>
            <person name="Peterson J.D."/>
            <person name="DeBoy R.T."/>
            <person name="Dodson R.J."/>
            <person name="Gwinn M.L."/>
            <person name="Haft D.H."/>
            <person name="Hickey E.K."/>
            <person name="Kolonay J.F."/>
            <person name="Nelson W.C."/>
            <person name="Umayam L.A."/>
            <person name="Ermolaeva M.D."/>
            <person name="Salzberg S.L."/>
            <person name="Delcher A."/>
            <person name="Utterback T.R."/>
            <person name="Weidman J.F."/>
            <person name="Khouri H.M."/>
            <person name="Gill J."/>
            <person name="Mikula A."/>
            <person name="Bishai W."/>
            <person name="Jacobs W.R. Jr."/>
            <person name="Venter J.C."/>
            <person name="Fraser C.M."/>
        </authorList>
    </citation>
    <scope>NUCLEOTIDE SEQUENCE [LARGE SCALE GENOMIC DNA]</scope>
    <source>
        <strain>CDC 1551 / Oshkosh</strain>
    </source>
</reference>
<reference key="2">
    <citation type="journal article" date="2003" name="J. Exp. Med.">
        <title>Inhibition of respiration by nitric oxide induces a Mycobacterium tuberculosis dormancy program.</title>
        <authorList>
            <person name="Voskuil M.I."/>
            <person name="Schnappinger D."/>
            <person name="Visconti K.C."/>
            <person name="Harrell M.I."/>
            <person name="Dolganov G.M."/>
            <person name="Sherman D.R."/>
            <person name="Schoolnik G.K."/>
        </authorList>
    </citation>
    <scope>INDUCTION BY NITRIC OXIDE (NO) AND BY HYPOXIA</scope>
    <scope>DORMANCY REGULON</scope>
    <source>
        <strain>CDC 1551 / Oshkosh</strain>
    </source>
</reference>